<sequence length="132" mass="15148">MLKYMLDTNIVIYVIKRRPLEILSRFNQNAGKMCVSSITVAELYYGAEKSEYPERNIAVIEDFLSRLTILDYQPKHAAHFGNIKAELSKQGKLIGENDIHIAAHARSEGLILVSNNLREFERVIALRTENWV</sequence>
<feature type="chain" id="PRO_0000077981" description="Ribonuclease VapC2">
    <location>
        <begin position="1"/>
        <end position="132"/>
    </location>
</feature>
<feature type="domain" description="PINc" evidence="2">
    <location>
        <begin position="4"/>
        <end position="130"/>
    </location>
</feature>
<feature type="binding site" evidence="2">
    <location>
        <position position="7"/>
    </location>
    <ligand>
        <name>Mg(2+)</name>
        <dbReference type="ChEBI" id="CHEBI:18420"/>
    </ligand>
</feature>
<feature type="binding site" evidence="2">
    <location>
        <position position="98"/>
    </location>
    <ligand>
        <name>Mg(2+)</name>
        <dbReference type="ChEBI" id="CHEBI:18420"/>
    </ligand>
</feature>
<comment type="function">
    <text evidence="1 2">Toxic component of a type II toxin-antitoxin (TA) system. An RNase. Its cognate antitoxin is VapB2 (By similarity).</text>
</comment>
<comment type="cofactor">
    <cofactor evidence="2">
        <name>Mg(2+)</name>
        <dbReference type="ChEBI" id="CHEBI:18420"/>
    </cofactor>
</comment>
<comment type="similarity">
    <text evidence="2">Belongs to the PINc/VapC protein family.</text>
</comment>
<protein>
    <recommendedName>
        <fullName evidence="2">Ribonuclease VapC2</fullName>
        <shortName evidence="2">RNase VapC2</shortName>
        <ecNumber evidence="2">3.1.-.-</ecNumber>
    </recommendedName>
    <alternativeName>
        <fullName evidence="2">Toxin VapC2</fullName>
    </alternativeName>
</protein>
<evidence type="ECO:0000250" key="1">
    <source>
        <dbReference type="UniProtKB" id="Q4QLW0"/>
    </source>
</evidence>
<evidence type="ECO:0000255" key="2">
    <source>
        <dbReference type="HAMAP-Rule" id="MF_00265"/>
    </source>
</evidence>
<proteinExistence type="inferred from homology"/>
<gene>
    <name evidence="2" type="primary">vapC2</name>
    <name type="ordered locus">HI_0947</name>
</gene>
<dbReference type="EC" id="3.1.-.-" evidence="2"/>
<dbReference type="EMBL" id="L42023">
    <property type="protein sequence ID" value="AAC22608.1"/>
    <property type="molecule type" value="Genomic_DNA"/>
</dbReference>
<dbReference type="PIR" id="B64104">
    <property type="entry name" value="B64104"/>
</dbReference>
<dbReference type="RefSeq" id="NP_439108.1">
    <property type="nucleotide sequence ID" value="NC_000907.1"/>
</dbReference>
<dbReference type="SMR" id="P71363"/>
<dbReference type="STRING" id="71421.HI_0947"/>
<dbReference type="EnsemblBacteria" id="AAC22608">
    <property type="protein sequence ID" value="AAC22608"/>
    <property type="gene ID" value="HI_0947"/>
</dbReference>
<dbReference type="KEGG" id="hin:HI_0947"/>
<dbReference type="PATRIC" id="fig|71421.8.peg.989"/>
<dbReference type="eggNOG" id="COG1487">
    <property type="taxonomic scope" value="Bacteria"/>
</dbReference>
<dbReference type="HOGENOM" id="CLU_118482_5_3_6"/>
<dbReference type="OrthoDB" id="9796690at2"/>
<dbReference type="PhylomeDB" id="P71363"/>
<dbReference type="BioCyc" id="HINF71421:G1GJ1-988-MONOMER"/>
<dbReference type="Proteomes" id="UP000000579">
    <property type="component" value="Chromosome"/>
</dbReference>
<dbReference type="GO" id="GO:0000287">
    <property type="term" value="F:magnesium ion binding"/>
    <property type="evidence" value="ECO:0007669"/>
    <property type="project" value="UniProtKB-UniRule"/>
</dbReference>
<dbReference type="GO" id="GO:0004521">
    <property type="term" value="F:RNA endonuclease activity"/>
    <property type="evidence" value="ECO:0000318"/>
    <property type="project" value="GO_Central"/>
</dbReference>
<dbReference type="Gene3D" id="3.40.50.1010">
    <property type="entry name" value="5'-nuclease"/>
    <property type="match status" value="1"/>
</dbReference>
<dbReference type="HAMAP" id="MF_00265">
    <property type="entry name" value="VapC_Nob1"/>
    <property type="match status" value="1"/>
</dbReference>
<dbReference type="InterPro" id="IPR029060">
    <property type="entry name" value="PIN-like_dom_sf"/>
</dbReference>
<dbReference type="InterPro" id="IPR002716">
    <property type="entry name" value="PIN_dom"/>
</dbReference>
<dbReference type="InterPro" id="IPR050556">
    <property type="entry name" value="Type_II_TA_system_RNase"/>
</dbReference>
<dbReference type="InterPro" id="IPR022907">
    <property type="entry name" value="VapC_family"/>
</dbReference>
<dbReference type="NCBIfam" id="NF010285">
    <property type="entry name" value="PRK13725.1"/>
    <property type="match status" value="1"/>
</dbReference>
<dbReference type="PANTHER" id="PTHR33653">
    <property type="entry name" value="RIBONUCLEASE VAPC2"/>
    <property type="match status" value="1"/>
</dbReference>
<dbReference type="PANTHER" id="PTHR33653:SF1">
    <property type="entry name" value="RIBONUCLEASE VAPC2"/>
    <property type="match status" value="1"/>
</dbReference>
<dbReference type="Pfam" id="PF01850">
    <property type="entry name" value="PIN"/>
    <property type="match status" value="1"/>
</dbReference>
<dbReference type="SMART" id="SM00670">
    <property type="entry name" value="PINc"/>
    <property type="match status" value="1"/>
</dbReference>
<dbReference type="SUPFAM" id="SSF88723">
    <property type="entry name" value="PIN domain-like"/>
    <property type="match status" value="1"/>
</dbReference>
<name>VAPC2_HAEIN</name>
<organism>
    <name type="scientific">Haemophilus influenzae (strain ATCC 51907 / DSM 11121 / KW20 / Rd)</name>
    <dbReference type="NCBI Taxonomy" id="71421"/>
    <lineage>
        <taxon>Bacteria</taxon>
        <taxon>Pseudomonadati</taxon>
        <taxon>Pseudomonadota</taxon>
        <taxon>Gammaproteobacteria</taxon>
        <taxon>Pasteurellales</taxon>
        <taxon>Pasteurellaceae</taxon>
        <taxon>Haemophilus</taxon>
    </lineage>
</organism>
<accession>P71363</accession>
<reference key="1">
    <citation type="journal article" date="1995" name="Science">
        <title>Whole-genome random sequencing and assembly of Haemophilus influenzae Rd.</title>
        <authorList>
            <person name="Fleischmann R.D."/>
            <person name="Adams M.D."/>
            <person name="White O."/>
            <person name="Clayton R.A."/>
            <person name="Kirkness E.F."/>
            <person name="Kerlavage A.R."/>
            <person name="Bult C.J."/>
            <person name="Tomb J.-F."/>
            <person name="Dougherty B.A."/>
            <person name="Merrick J.M."/>
            <person name="McKenney K."/>
            <person name="Sutton G.G."/>
            <person name="FitzHugh W."/>
            <person name="Fields C.A."/>
            <person name="Gocayne J.D."/>
            <person name="Scott J.D."/>
            <person name="Shirley R."/>
            <person name="Liu L.-I."/>
            <person name="Glodek A."/>
            <person name="Kelley J.M."/>
            <person name="Weidman J.F."/>
            <person name="Phillips C.A."/>
            <person name="Spriggs T."/>
            <person name="Hedblom E."/>
            <person name="Cotton M.D."/>
            <person name="Utterback T.R."/>
            <person name="Hanna M.C."/>
            <person name="Nguyen D.T."/>
            <person name="Saudek D.M."/>
            <person name="Brandon R.C."/>
            <person name="Fine L.D."/>
            <person name="Fritchman J.L."/>
            <person name="Fuhrmann J.L."/>
            <person name="Geoghagen N.S.M."/>
            <person name="Gnehm C.L."/>
            <person name="McDonald L.A."/>
            <person name="Small K.V."/>
            <person name="Fraser C.M."/>
            <person name="Smith H.O."/>
            <person name="Venter J.C."/>
        </authorList>
    </citation>
    <scope>NUCLEOTIDE SEQUENCE [LARGE SCALE GENOMIC DNA]</scope>
    <source>
        <strain>ATCC 51907 / DSM 11121 / KW20 / Rd</strain>
    </source>
</reference>
<keyword id="KW-0378">Hydrolase</keyword>
<keyword id="KW-0460">Magnesium</keyword>
<keyword id="KW-0479">Metal-binding</keyword>
<keyword id="KW-0540">Nuclease</keyword>
<keyword id="KW-1185">Reference proteome</keyword>
<keyword id="KW-1277">Toxin-antitoxin system</keyword>